<protein>
    <recommendedName>
        <fullName>Staphostatin B</fullName>
    </recommendedName>
    <alternativeName>
        <fullName>Staphylococcal cysteine protease B inhibitor</fullName>
    </alternativeName>
</protein>
<gene>
    <name type="primary">sspC</name>
    <name type="ordered locus">SAV1046</name>
</gene>
<feature type="chain" id="PRO_0000220555" description="Staphostatin B">
    <location>
        <begin position="1"/>
        <end position="109"/>
    </location>
</feature>
<feature type="region of interest" description="Binds to staphopain B" evidence="1">
    <location>
        <begin position="97"/>
        <end position="101"/>
    </location>
</feature>
<keyword id="KW-0963">Cytoplasm</keyword>
<keyword id="KW-0646">Protease inhibitor</keyword>
<keyword id="KW-0789">Thiol protease inhibitor</keyword>
<keyword id="KW-0843">Virulence</keyword>
<sequence>MYQLQFINLVYDTTKLTHLEQTNINLFIGNWSNHQLQKSICIRHGDDTSHNQYHILFIDTAHQRIKFSSIDNEEITYILDYDDTQHILMQTSSKQGIGTSRPIVYERLV</sequence>
<organism>
    <name type="scientific">Staphylococcus aureus (strain Mu50 / ATCC 700699)</name>
    <dbReference type="NCBI Taxonomy" id="158878"/>
    <lineage>
        <taxon>Bacteria</taxon>
        <taxon>Bacillati</taxon>
        <taxon>Bacillota</taxon>
        <taxon>Bacilli</taxon>
        <taxon>Bacillales</taxon>
        <taxon>Staphylococcaceae</taxon>
        <taxon>Staphylococcus</taxon>
    </lineage>
</organism>
<reference key="1">
    <citation type="journal article" date="2001" name="Lancet">
        <title>Whole genome sequencing of meticillin-resistant Staphylococcus aureus.</title>
        <authorList>
            <person name="Kuroda M."/>
            <person name="Ohta T."/>
            <person name="Uchiyama I."/>
            <person name="Baba T."/>
            <person name="Yuzawa H."/>
            <person name="Kobayashi I."/>
            <person name="Cui L."/>
            <person name="Oguchi A."/>
            <person name="Aoki K."/>
            <person name="Nagai Y."/>
            <person name="Lian J.-Q."/>
            <person name="Ito T."/>
            <person name="Kanamori M."/>
            <person name="Matsumaru H."/>
            <person name="Maruyama A."/>
            <person name="Murakami H."/>
            <person name="Hosoyama A."/>
            <person name="Mizutani-Ui Y."/>
            <person name="Takahashi N.K."/>
            <person name="Sawano T."/>
            <person name="Inoue R."/>
            <person name="Kaito C."/>
            <person name="Sekimizu K."/>
            <person name="Hirakawa H."/>
            <person name="Kuhara S."/>
            <person name="Goto S."/>
            <person name="Yabuzaki J."/>
            <person name="Kanehisa M."/>
            <person name="Yamashita A."/>
            <person name="Oshima K."/>
            <person name="Furuya K."/>
            <person name="Yoshino C."/>
            <person name="Shiba T."/>
            <person name="Hattori M."/>
            <person name="Ogasawara N."/>
            <person name="Hayashi H."/>
            <person name="Hiramatsu K."/>
        </authorList>
    </citation>
    <scope>NUCLEOTIDE SEQUENCE [LARGE SCALE GENOMIC DNA]</scope>
    <source>
        <strain>Mu50 / ATCC 700699</strain>
    </source>
</reference>
<evidence type="ECO:0000250" key="1"/>
<evidence type="ECO:0000305" key="2"/>
<comment type="function">
    <text evidence="1">Specifically inhibits the cysteine protease staphopain B (SspB) by blocking the active site of the enzyme. Probably required to protect cytoplasmic proteins from being degraded by prematurely activated/folded prostaphopain B. Also involved in growth capacity, viability and bacterial morphology (By similarity).</text>
</comment>
<comment type="subunit">
    <text evidence="1">Forms a stable non-covalent complex with prematurely activated/folded SspB.</text>
</comment>
<comment type="subcellular location">
    <subcellularLocation>
        <location evidence="1">Cytoplasm</location>
    </subcellularLocation>
</comment>
<comment type="miscellaneous">
    <text evidence="1">Inactivated by staphylococcal serine protease (SspA).</text>
</comment>
<comment type="similarity">
    <text evidence="2">Belongs to the protease inhibitor I57 (SspC) family.</text>
</comment>
<name>SSPC_STAAM</name>
<accession>Q99V47</accession>
<dbReference type="EMBL" id="BA000017">
    <property type="protein sequence ID" value="BAB57208.1"/>
    <property type="molecule type" value="Genomic_DNA"/>
</dbReference>
<dbReference type="RefSeq" id="WP_000284458.1">
    <property type="nucleotide sequence ID" value="NC_002758.2"/>
</dbReference>
<dbReference type="SMR" id="Q99V47"/>
<dbReference type="MEROPS" id="I57.001"/>
<dbReference type="KEGG" id="sav:SAV1046"/>
<dbReference type="HOGENOM" id="CLU_174854_0_0_9"/>
<dbReference type="Proteomes" id="UP000002481">
    <property type="component" value="Chromosome"/>
</dbReference>
<dbReference type="GO" id="GO:0005737">
    <property type="term" value="C:cytoplasm"/>
    <property type="evidence" value="ECO:0007669"/>
    <property type="project" value="UniProtKB-SubCell"/>
</dbReference>
<dbReference type="GO" id="GO:0004869">
    <property type="term" value="F:cysteine-type endopeptidase inhibitor activity"/>
    <property type="evidence" value="ECO:0007669"/>
    <property type="project" value="UniProtKB-KW"/>
</dbReference>
<dbReference type="Gene3D" id="2.40.310.10">
    <property type="entry name" value="beta-Barrel protease inhibitors"/>
    <property type="match status" value="1"/>
</dbReference>
<dbReference type="InterPro" id="IPR016085">
    <property type="entry name" value="Protease_inh_b-brl_dom"/>
</dbReference>
<dbReference type="InterPro" id="IPR037296">
    <property type="entry name" value="Staphostatin_A/B"/>
</dbReference>
<dbReference type="InterPro" id="IPR015113">
    <property type="entry name" value="Staphostatin_B"/>
</dbReference>
<dbReference type="Pfam" id="PF09023">
    <property type="entry name" value="Staphostatin_B"/>
    <property type="match status" value="1"/>
</dbReference>
<dbReference type="SUPFAM" id="SSF50882">
    <property type="entry name" value="beta-Barrel protease inhibitors"/>
    <property type="match status" value="1"/>
</dbReference>
<proteinExistence type="inferred from homology"/>